<name>RS16_CAMFF</name>
<accession>A0RPR9</accession>
<feature type="chain" id="PRO_1000049233" description="Small ribosomal subunit protein bS16">
    <location>
        <begin position="1"/>
        <end position="75"/>
    </location>
</feature>
<sequence length="75" mass="8760">MATVVRLTRMGRNKRPFYRIVVTDSRKRRDSGWIESIGYYNPMVEPEVVKVDADRLAYWKSVGAKLSDRVARITK</sequence>
<protein>
    <recommendedName>
        <fullName evidence="1">Small ribosomal subunit protein bS16</fullName>
    </recommendedName>
    <alternativeName>
        <fullName evidence="2">30S ribosomal protein S16</fullName>
    </alternativeName>
</protein>
<keyword id="KW-0687">Ribonucleoprotein</keyword>
<keyword id="KW-0689">Ribosomal protein</keyword>
<reference key="1">
    <citation type="submission" date="2006-11" db="EMBL/GenBank/DDBJ databases">
        <title>Sequence of Campylobacter fetus subsp. fetus 82-40.</title>
        <authorList>
            <person name="Fouts D.E."/>
            <person name="Nelson K.E."/>
        </authorList>
    </citation>
    <scope>NUCLEOTIDE SEQUENCE [LARGE SCALE GENOMIC DNA]</scope>
    <source>
        <strain>82-40</strain>
    </source>
</reference>
<proteinExistence type="inferred from homology"/>
<dbReference type="EMBL" id="CP000487">
    <property type="protein sequence ID" value="ABK82829.1"/>
    <property type="molecule type" value="Genomic_DNA"/>
</dbReference>
<dbReference type="RefSeq" id="WP_002849606.1">
    <property type="nucleotide sequence ID" value="NC_008599.1"/>
</dbReference>
<dbReference type="SMR" id="A0RPR9"/>
<dbReference type="GeneID" id="61064866"/>
<dbReference type="KEGG" id="cff:CFF8240_1038"/>
<dbReference type="eggNOG" id="COG0228">
    <property type="taxonomic scope" value="Bacteria"/>
</dbReference>
<dbReference type="HOGENOM" id="CLU_100590_5_1_7"/>
<dbReference type="Proteomes" id="UP000000760">
    <property type="component" value="Chromosome"/>
</dbReference>
<dbReference type="GO" id="GO:0005737">
    <property type="term" value="C:cytoplasm"/>
    <property type="evidence" value="ECO:0007669"/>
    <property type="project" value="UniProtKB-ARBA"/>
</dbReference>
<dbReference type="GO" id="GO:0015935">
    <property type="term" value="C:small ribosomal subunit"/>
    <property type="evidence" value="ECO:0007669"/>
    <property type="project" value="TreeGrafter"/>
</dbReference>
<dbReference type="GO" id="GO:0003735">
    <property type="term" value="F:structural constituent of ribosome"/>
    <property type="evidence" value="ECO:0007669"/>
    <property type="project" value="InterPro"/>
</dbReference>
<dbReference type="GO" id="GO:0006412">
    <property type="term" value="P:translation"/>
    <property type="evidence" value="ECO:0007669"/>
    <property type="project" value="UniProtKB-UniRule"/>
</dbReference>
<dbReference type="Gene3D" id="3.30.1320.10">
    <property type="match status" value="1"/>
</dbReference>
<dbReference type="HAMAP" id="MF_00385">
    <property type="entry name" value="Ribosomal_bS16"/>
    <property type="match status" value="1"/>
</dbReference>
<dbReference type="InterPro" id="IPR000307">
    <property type="entry name" value="Ribosomal_bS16"/>
</dbReference>
<dbReference type="InterPro" id="IPR020592">
    <property type="entry name" value="Ribosomal_bS16_CS"/>
</dbReference>
<dbReference type="InterPro" id="IPR023803">
    <property type="entry name" value="Ribosomal_bS16_dom_sf"/>
</dbReference>
<dbReference type="NCBIfam" id="TIGR00002">
    <property type="entry name" value="S16"/>
    <property type="match status" value="1"/>
</dbReference>
<dbReference type="PANTHER" id="PTHR12919">
    <property type="entry name" value="30S RIBOSOMAL PROTEIN S16"/>
    <property type="match status" value="1"/>
</dbReference>
<dbReference type="PANTHER" id="PTHR12919:SF20">
    <property type="entry name" value="SMALL RIBOSOMAL SUBUNIT PROTEIN BS16M"/>
    <property type="match status" value="1"/>
</dbReference>
<dbReference type="Pfam" id="PF00886">
    <property type="entry name" value="Ribosomal_S16"/>
    <property type="match status" value="1"/>
</dbReference>
<dbReference type="SUPFAM" id="SSF54565">
    <property type="entry name" value="Ribosomal protein S16"/>
    <property type="match status" value="1"/>
</dbReference>
<dbReference type="PROSITE" id="PS00732">
    <property type="entry name" value="RIBOSOMAL_S16"/>
    <property type="match status" value="1"/>
</dbReference>
<comment type="similarity">
    <text evidence="1">Belongs to the bacterial ribosomal protein bS16 family.</text>
</comment>
<evidence type="ECO:0000255" key="1">
    <source>
        <dbReference type="HAMAP-Rule" id="MF_00385"/>
    </source>
</evidence>
<evidence type="ECO:0000305" key="2"/>
<gene>
    <name evidence="1" type="primary">rpsP</name>
    <name type="ordered locus">CFF8240_1038</name>
</gene>
<organism>
    <name type="scientific">Campylobacter fetus subsp. fetus (strain 82-40)</name>
    <dbReference type="NCBI Taxonomy" id="360106"/>
    <lineage>
        <taxon>Bacteria</taxon>
        <taxon>Pseudomonadati</taxon>
        <taxon>Campylobacterota</taxon>
        <taxon>Epsilonproteobacteria</taxon>
        <taxon>Campylobacterales</taxon>
        <taxon>Campylobacteraceae</taxon>
        <taxon>Campylobacter</taxon>
    </lineage>
</organism>